<protein>
    <recommendedName>
        <fullName evidence="1">Ion-translocating oxidoreductase complex subunit D</fullName>
        <ecNumber evidence="1">7.-.-.-</ecNumber>
    </recommendedName>
    <alternativeName>
        <fullName evidence="1">Rnf electron transport complex subunit D</fullName>
    </alternativeName>
</protein>
<sequence>MFKMVSSPHTHSGKLTARIMLWVILAMMPAFFTQIYYFGFGVLLQSALAIGTAIIAEFIAIKLRGKKPLNYLSDFSVALTALILAMAIPPYAPYWVIIIGTLCAVLLGKQVYGGLGQNPFNPAMIGYVILLISFPLQMTTWMPPINLLQEPPTFSDAFSLIFSGLTTDGFTLSQLTHNIDGITQATPLDSAKIFYKSHNQLSDFYELIKLPIFMGNGTDFAQGWWQINVAFLAGGIFLILKRIIHWQIPVAMLVTFFCLATATAFTGFTHLSAISQLVSGAMMFGAFFIATDPVTASITPRGKIIFGALVGLFVYLIRYHGNYPDGVAFAILLSNICVPLIDHYTRPRVSGYPTKGRK</sequence>
<reference key="1">
    <citation type="journal article" date="2007" name="Genome Biol.">
        <title>Characterization and modeling of the Haemophilus influenzae core and supragenomes based on the complete genomic sequences of Rd and 12 clinical nontypeable strains.</title>
        <authorList>
            <person name="Hogg J.S."/>
            <person name="Hu F.Z."/>
            <person name="Janto B."/>
            <person name="Boissy R."/>
            <person name="Hayes J."/>
            <person name="Keefe R."/>
            <person name="Post J.C."/>
            <person name="Ehrlich G.D."/>
        </authorList>
    </citation>
    <scope>NUCLEOTIDE SEQUENCE [LARGE SCALE GENOMIC DNA]</scope>
    <source>
        <strain>PittEE</strain>
    </source>
</reference>
<organism>
    <name type="scientific">Haemophilus influenzae (strain PittEE)</name>
    <dbReference type="NCBI Taxonomy" id="374930"/>
    <lineage>
        <taxon>Bacteria</taxon>
        <taxon>Pseudomonadati</taxon>
        <taxon>Pseudomonadota</taxon>
        <taxon>Gammaproteobacteria</taxon>
        <taxon>Pasteurellales</taxon>
        <taxon>Pasteurellaceae</taxon>
        <taxon>Haemophilus</taxon>
    </lineage>
</organism>
<gene>
    <name evidence="1" type="primary">rnfD</name>
    <name type="ordered locus">CGSHiEE_03605</name>
</gene>
<name>RNFD_HAEIE</name>
<dbReference type="EC" id="7.-.-.-" evidence="1"/>
<dbReference type="EMBL" id="CP000671">
    <property type="protein sequence ID" value="ABQ98140.1"/>
    <property type="molecule type" value="Genomic_DNA"/>
</dbReference>
<dbReference type="SMR" id="A5UBI9"/>
<dbReference type="KEGG" id="hip:CGSHiEE_03605"/>
<dbReference type="HOGENOM" id="CLU_042020_0_0_6"/>
<dbReference type="GO" id="GO:0005886">
    <property type="term" value="C:plasma membrane"/>
    <property type="evidence" value="ECO:0007669"/>
    <property type="project" value="UniProtKB-SubCell"/>
</dbReference>
<dbReference type="GO" id="GO:0022900">
    <property type="term" value="P:electron transport chain"/>
    <property type="evidence" value="ECO:0007669"/>
    <property type="project" value="UniProtKB-UniRule"/>
</dbReference>
<dbReference type="GO" id="GO:0055085">
    <property type="term" value="P:transmembrane transport"/>
    <property type="evidence" value="ECO:0007669"/>
    <property type="project" value="InterPro"/>
</dbReference>
<dbReference type="HAMAP" id="MF_00462">
    <property type="entry name" value="RsxD_RnfD"/>
    <property type="match status" value="1"/>
</dbReference>
<dbReference type="InterPro" id="IPR004338">
    <property type="entry name" value="NqrB/RnfD"/>
</dbReference>
<dbReference type="InterPro" id="IPR011303">
    <property type="entry name" value="RnfD_bac"/>
</dbReference>
<dbReference type="NCBIfam" id="NF002011">
    <property type="entry name" value="PRK00816.1"/>
    <property type="match status" value="1"/>
</dbReference>
<dbReference type="NCBIfam" id="TIGR01946">
    <property type="entry name" value="rnfD"/>
    <property type="match status" value="1"/>
</dbReference>
<dbReference type="PANTHER" id="PTHR30578">
    <property type="entry name" value="ELECTRON TRANSPORT COMPLEX PROTEIN RNFD"/>
    <property type="match status" value="1"/>
</dbReference>
<dbReference type="PANTHER" id="PTHR30578:SF0">
    <property type="entry name" value="ION-TRANSLOCATING OXIDOREDUCTASE COMPLEX SUBUNIT D"/>
    <property type="match status" value="1"/>
</dbReference>
<dbReference type="Pfam" id="PF03116">
    <property type="entry name" value="NQR2_RnfD_RnfE"/>
    <property type="match status" value="1"/>
</dbReference>
<accession>A5UBI9</accession>
<evidence type="ECO:0000255" key="1">
    <source>
        <dbReference type="HAMAP-Rule" id="MF_00462"/>
    </source>
</evidence>
<feature type="chain" id="PRO_1000013625" description="Ion-translocating oxidoreductase complex subunit D">
    <location>
        <begin position="1"/>
        <end position="358"/>
    </location>
</feature>
<feature type="transmembrane region" description="Helical" evidence="1">
    <location>
        <begin position="19"/>
        <end position="39"/>
    </location>
</feature>
<feature type="transmembrane region" description="Helical" evidence="1">
    <location>
        <begin position="41"/>
        <end position="61"/>
    </location>
</feature>
<feature type="transmembrane region" description="Helical" evidence="1">
    <location>
        <begin position="79"/>
        <end position="99"/>
    </location>
</feature>
<feature type="transmembrane region" description="Helical" evidence="1">
    <location>
        <begin position="125"/>
        <end position="145"/>
    </location>
</feature>
<feature type="transmembrane region" description="Helical" evidence="1">
    <location>
        <begin position="220"/>
        <end position="240"/>
    </location>
</feature>
<feature type="transmembrane region" description="Helical" evidence="1">
    <location>
        <begin position="248"/>
        <end position="268"/>
    </location>
</feature>
<feature type="transmembrane region" description="Helical" evidence="1">
    <location>
        <begin position="271"/>
        <end position="291"/>
    </location>
</feature>
<feature type="transmembrane region" description="Helical" evidence="1">
    <location>
        <begin position="297"/>
        <end position="317"/>
    </location>
</feature>
<feature type="transmembrane region" description="Helical" evidence="1">
    <location>
        <begin position="321"/>
        <end position="341"/>
    </location>
</feature>
<feature type="modified residue" description="FMN phosphoryl threonine" evidence="1">
    <location>
        <position position="186"/>
    </location>
</feature>
<comment type="function">
    <text evidence="1">Part of a membrane-bound complex that couples electron transfer with translocation of ions across the membrane.</text>
</comment>
<comment type="cofactor">
    <cofactor evidence="1">
        <name>FMN</name>
        <dbReference type="ChEBI" id="CHEBI:58210"/>
    </cofactor>
</comment>
<comment type="subunit">
    <text evidence="1">The complex is composed of six subunits: RnfA, RnfB, RnfC, RnfD, RnfE and RnfG.</text>
</comment>
<comment type="subcellular location">
    <subcellularLocation>
        <location evidence="1">Cell inner membrane</location>
        <topology evidence="1">Multi-pass membrane protein</topology>
    </subcellularLocation>
</comment>
<comment type="similarity">
    <text evidence="1">Belongs to the NqrB/RnfD family.</text>
</comment>
<proteinExistence type="inferred from homology"/>
<keyword id="KW-0997">Cell inner membrane</keyword>
<keyword id="KW-1003">Cell membrane</keyword>
<keyword id="KW-0249">Electron transport</keyword>
<keyword id="KW-0285">Flavoprotein</keyword>
<keyword id="KW-0288">FMN</keyword>
<keyword id="KW-0472">Membrane</keyword>
<keyword id="KW-0597">Phosphoprotein</keyword>
<keyword id="KW-1278">Translocase</keyword>
<keyword id="KW-0812">Transmembrane</keyword>
<keyword id="KW-1133">Transmembrane helix</keyword>
<keyword id="KW-0813">Transport</keyword>